<name>GSA_BURP1</name>
<protein>
    <recommendedName>
        <fullName evidence="1">Glutamate-1-semialdehyde 2,1-aminomutase</fullName>
        <shortName evidence="1">GSA</shortName>
        <ecNumber evidence="1">5.4.3.8</ecNumber>
    </recommendedName>
    <alternativeName>
        <fullName evidence="1">Glutamate-1-semialdehyde aminotransferase</fullName>
        <shortName evidence="1">GSA-AT</shortName>
    </alternativeName>
</protein>
<proteinExistence type="inferred from homology"/>
<evidence type="ECO:0000255" key="1">
    <source>
        <dbReference type="HAMAP-Rule" id="MF_00375"/>
    </source>
</evidence>
<evidence type="ECO:0000305" key="2"/>
<sequence>MSNNQTLFERAQRTIPGGVNSPVRAFRSVGGTPRFVARAQGAYFWDADGKRYIDYIGSWGPMIVGHVHPDVLAAVQRVLADGFSFGAPTEAEIEIAEEICKLVPSIEQVRMVSSGTEATMSALRLARGFTGRSRIVKFEGCYHGHADSLLVKAGSGLLTFGNPTSAGVPADVAKHTTVLEYNNVAALEEAFAAFGGEIAAVIVEPVAGNMNLVRGTPEFLNALRALTAKHGAVLIFDEVMCGFRVALGGAQQHYGITPDLTCLGKVIGGGMPAAAFGGRGDIMSHLAPLGGVYQAGTLSGNPVAVAAGLATLRLIQAPGFHDALADKTRRLADGLAAEARAAGVPFSADAIGGMFGLYFTEQVPASFADVTKSDIERFNRFFHLMLDAGVYFAPSAYEAGFVSSAHDDATLDATLDAARRAFAALRA</sequence>
<keyword id="KW-0963">Cytoplasm</keyword>
<keyword id="KW-0413">Isomerase</keyword>
<keyword id="KW-0627">Porphyrin biosynthesis</keyword>
<keyword id="KW-0663">Pyridoxal phosphate</keyword>
<reference key="1">
    <citation type="journal article" date="2010" name="Genome Biol. Evol.">
        <title>Continuing evolution of Burkholderia mallei through genome reduction and large-scale rearrangements.</title>
        <authorList>
            <person name="Losada L."/>
            <person name="Ronning C.M."/>
            <person name="DeShazer D."/>
            <person name="Woods D."/>
            <person name="Fedorova N."/>
            <person name="Kim H.S."/>
            <person name="Shabalina S.A."/>
            <person name="Pearson T.R."/>
            <person name="Brinkac L."/>
            <person name="Tan P."/>
            <person name="Nandi T."/>
            <person name="Crabtree J."/>
            <person name="Badger J."/>
            <person name="Beckstrom-Sternberg S."/>
            <person name="Saqib M."/>
            <person name="Schutzer S.E."/>
            <person name="Keim P."/>
            <person name="Nierman W.C."/>
        </authorList>
    </citation>
    <scope>NUCLEOTIDE SEQUENCE [LARGE SCALE GENOMIC DNA]</scope>
    <source>
        <strain>1710b</strain>
    </source>
</reference>
<organism>
    <name type="scientific">Burkholderia pseudomallei (strain 1710b)</name>
    <dbReference type="NCBI Taxonomy" id="320372"/>
    <lineage>
        <taxon>Bacteria</taxon>
        <taxon>Pseudomonadati</taxon>
        <taxon>Pseudomonadota</taxon>
        <taxon>Betaproteobacteria</taxon>
        <taxon>Burkholderiales</taxon>
        <taxon>Burkholderiaceae</taxon>
        <taxon>Burkholderia</taxon>
        <taxon>pseudomallei group</taxon>
    </lineage>
</organism>
<comment type="catalytic activity">
    <reaction evidence="1">
        <text>(S)-4-amino-5-oxopentanoate = 5-aminolevulinate</text>
        <dbReference type="Rhea" id="RHEA:14265"/>
        <dbReference type="ChEBI" id="CHEBI:57501"/>
        <dbReference type="ChEBI" id="CHEBI:356416"/>
        <dbReference type="EC" id="5.4.3.8"/>
    </reaction>
</comment>
<comment type="cofactor">
    <cofactor evidence="1">
        <name>pyridoxal 5'-phosphate</name>
        <dbReference type="ChEBI" id="CHEBI:597326"/>
    </cofactor>
</comment>
<comment type="pathway">
    <text evidence="1">Porphyrin-containing compound metabolism; protoporphyrin-IX biosynthesis; 5-aminolevulinate from L-glutamyl-tRNA(Glu): step 2/2.</text>
</comment>
<comment type="subunit">
    <text evidence="1">Homodimer.</text>
</comment>
<comment type="subcellular location">
    <subcellularLocation>
        <location evidence="1">Cytoplasm</location>
    </subcellularLocation>
</comment>
<comment type="similarity">
    <text evidence="1">Belongs to the class-III pyridoxal-phosphate-dependent aminotransferase family. HemL subfamily.</text>
</comment>
<comment type="sequence caution" evidence="2">
    <conflict type="erroneous initiation">
        <sequence resource="EMBL-CDS" id="ABA50429"/>
    </conflict>
</comment>
<gene>
    <name evidence="1" type="primary">hemL</name>
    <name type="ordered locus">BURPS1710b_3099</name>
</gene>
<accession>Q3JPN1</accession>
<dbReference type="EC" id="5.4.3.8" evidence="1"/>
<dbReference type="EMBL" id="CP000124">
    <property type="protein sequence ID" value="ABA50429.1"/>
    <property type="status" value="ALT_INIT"/>
    <property type="molecule type" value="Genomic_DNA"/>
</dbReference>
<dbReference type="SMR" id="Q3JPN1"/>
<dbReference type="EnsemblBacteria" id="ABA50429">
    <property type="protein sequence ID" value="ABA50429"/>
    <property type="gene ID" value="BURPS1710b_3099"/>
</dbReference>
<dbReference type="KEGG" id="bpm:BURPS1710b_3099"/>
<dbReference type="HOGENOM" id="CLU_016922_1_3_4"/>
<dbReference type="UniPathway" id="UPA00251">
    <property type="reaction ID" value="UER00317"/>
</dbReference>
<dbReference type="Proteomes" id="UP000002700">
    <property type="component" value="Chromosome I"/>
</dbReference>
<dbReference type="GO" id="GO:0005737">
    <property type="term" value="C:cytoplasm"/>
    <property type="evidence" value="ECO:0007669"/>
    <property type="project" value="UniProtKB-SubCell"/>
</dbReference>
<dbReference type="GO" id="GO:0042286">
    <property type="term" value="F:glutamate-1-semialdehyde 2,1-aminomutase activity"/>
    <property type="evidence" value="ECO:0007669"/>
    <property type="project" value="UniProtKB-UniRule"/>
</dbReference>
<dbReference type="GO" id="GO:0030170">
    <property type="term" value="F:pyridoxal phosphate binding"/>
    <property type="evidence" value="ECO:0007669"/>
    <property type="project" value="InterPro"/>
</dbReference>
<dbReference type="GO" id="GO:0008483">
    <property type="term" value="F:transaminase activity"/>
    <property type="evidence" value="ECO:0007669"/>
    <property type="project" value="InterPro"/>
</dbReference>
<dbReference type="GO" id="GO:0006782">
    <property type="term" value="P:protoporphyrinogen IX biosynthetic process"/>
    <property type="evidence" value="ECO:0007669"/>
    <property type="project" value="UniProtKB-UniRule"/>
</dbReference>
<dbReference type="CDD" id="cd00610">
    <property type="entry name" value="OAT_like"/>
    <property type="match status" value="1"/>
</dbReference>
<dbReference type="FunFam" id="3.40.640.10:FF:000021">
    <property type="entry name" value="Glutamate-1-semialdehyde 2,1-aminomutase"/>
    <property type="match status" value="1"/>
</dbReference>
<dbReference type="Gene3D" id="3.90.1150.10">
    <property type="entry name" value="Aspartate Aminotransferase, domain 1"/>
    <property type="match status" value="1"/>
</dbReference>
<dbReference type="Gene3D" id="3.40.640.10">
    <property type="entry name" value="Type I PLP-dependent aspartate aminotransferase-like (Major domain)"/>
    <property type="match status" value="1"/>
</dbReference>
<dbReference type="HAMAP" id="MF_00375">
    <property type="entry name" value="HemL_aminotrans_3"/>
    <property type="match status" value="1"/>
</dbReference>
<dbReference type="InterPro" id="IPR004639">
    <property type="entry name" value="4pyrrol_synth_GluAld_NH2Trfase"/>
</dbReference>
<dbReference type="InterPro" id="IPR005814">
    <property type="entry name" value="Aminotrans_3"/>
</dbReference>
<dbReference type="InterPro" id="IPR049704">
    <property type="entry name" value="Aminotrans_3_PPA_site"/>
</dbReference>
<dbReference type="InterPro" id="IPR015424">
    <property type="entry name" value="PyrdxlP-dep_Trfase"/>
</dbReference>
<dbReference type="InterPro" id="IPR015421">
    <property type="entry name" value="PyrdxlP-dep_Trfase_major"/>
</dbReference>
<dbReference type="InterPro" id="IPR015422">
    <property type="entry name" value="PyrdxlP-dep_Trfase_small"/>
</dbReference>
<dbReference type="NCBIfam" id="TIGR00713">
    <property type="entry name" value="hemL"/>
    <property type="match status" value="1"/>
</dbReference>
<dbReference type="NCBIfam" id="NF000818">
    <property type="entry name" value="PRK00062.1"/>
    <property type="match status" value="1"/>
</dbReference>
<dbReference type="PANTHER" id="PTHR43713">
    <property type="entry name" value="GLUTAMATE-1-SEMIALDEHYDE 2,1-AMINOMUTASE"/>
    <property type="match status" value="1"/>
</dbReference>
<dbReference type="PANTHER" id="PTHR43713:SF3">
    <property type="entry name" value="GLUTAMATE-1-SEMIALDEHYDE 2,1-AMINOMUTASE 1, CHLOROPLASTIC-RELATED"/>
    <property type="match status" value="1"/>
</dbReference>
<dbReference type="Pfam" id="PF00202">
    <property type="entry name" value="Aminotran_3"/>
    <property type="match status" value="1"/>
</dbReference>
<dbReference type="SUPFAM" id="SSF53383">
    <property type="entry name" value="PLP-dependent transferases"/>
    <property type="match status" value="1"/>
</dbReference>
<dbReference type="PROSITE" id="PS00600">
    <property type="entry name" value="AA_TRANSFER_CLASS_3"/>
    <property type="match status" value="1"/>
</dbReference>
<feature type="chain" id="PRO_0000243556" description="Glutamate-1-semialdehyde 2,1-aminomutase">
    <location>
        <begin position="1"/>
        <end position="427"/>
    </location>
</feature>
<feature type="modified residue" description="N6-(pyridoxal phosphate)lysine" evidence="1">
    <location>
        <position position="265"/>
    </location>
</feature>